<evidence type="ECO:0000250" key="1"/>
<evidence type="ECO:0000305" key="2"/>
<accession>Q9BX51</accession>
<accession>D3DW43</accession>
<accession>Q08246</accession>
<gene>
    <name type="primary">GGTLC1</name>
    <name type="synonym">GGTLA4</name>
</gene>
<protein>
    <recommendedName>
        <fullName>Glutathione hydrolase light chain 1</fullName>
    </recommendedName>
    <alternativeName>
        <fullName>Gamma-glutamyltransferase light chain 1</fullName>
    </alternativeName>
    <alternativeName>
        <fullName>Gamma-glutamyltransferase-like activity 4</fullName>
    </alternativeName>
    <alternativeName>
        <fullName>Gamma-glutamyltransferase-like protein 6</fullName>
    </alternativeName>
</protein>
<comment type="interaction">
    <interactant intactId="EBI-21837646">
        <id>Q9BX51</id>
    </interactant>
    <interactant intactId="EBI-2832828">
        <id>P08263</id>
        <label>GSTA1</label>
    </interactant>
    <organismsDiffer>false</organismsDiffer>
    <experiments>2</experiments>
</comment>
<comment type="miscellaneous">
    <text>Corresponds to the light chain of other gamma-glutamyltransferase family members. Has no catalytic activity.</text>
</comment>
<comment type="similarity">
    <text evidence="2">Belongs to the gamma-glutamyltransferase family.</text>
</comment>
<reference key="1">
    <citation type="journal article" date="1993" name="Proc. Natl. Acad. Sci. U.S.A.">
        <title>Human lung expresses unique gamma-glutamyl transpeptidase transcripts.</title>
        <authorList>
            <person name="Wetmore L.A."/>
            <person name="Gerard C."/>
            <person name="Drazen J.M."/>
        </authorList>
    </citation>
    <scope>NUCLEOTIDE SEQUENCE [MRNA]</scope>
    <source>
        <tissue>Lung</tissue>
    </source>
</reference>
<reference key="2">
    <citation type="journal article" date="2001" name="Nature">
        <title>The DNA sequence and comparative analysis of human chromosome 20.</title>
        <authorList>
            <person name="Deloukas P."/>
            <person name="Matthews L.H."/>
            <person name="Ashurst J.L."/>
            <person name="Burton J."/>
            <person name="Gilbert J.G.R."/>
            <person name="Jones M."/>
            <person name="Stavrides G."/>
            <person name="Almeida J.P."/>
            <person name="Babbage A.K."/>
            <person name="Bagguley C.L."/>
            <person name="Bailey J."/>
            <person name="Barlow K.F."/>
            <person name="Bates K.N."/>
            <person name="Beard L.M."/>
            <person name="Beare D.M."/>
            <person name="Beasley O.P."/>
            <person name="Bird C.P."/>
            <person name="Blakey S.E."/>
            <person name="Bridgeman A.M."/>
            <person name="Brown A.J."/>
            <person name="Buck D."/>
            <person name="Burrill W.D."/>
            <person name="Butler A.P."/>
            <person name="Carder C."/>
            <person name="Carter N.P."/>
            <person name="Chapman J.C."/>
            <person name="Clamp M."/>
            <person name="Clark G."/>
            <person name="Clark L.N."/>
            <person name="Clark S.Y."/>
            <person name="Clee C.M."/>
            <person name="Clegg S."/>
            <person name="Cobley V.E."/>
            <person name="Collier R.E."/>
            <person name="Connor R.E."/>
            <person name="Corby N.R."/>
            <person name="Coulson A."/>
            <person name="Coville G.J."/>
            <person name="Deadman R."/>
            <person name="Dhami P.D."/>
            <person name="Dunn M."/>
            <person name="Ellington A.G."/>
            <person name="Frankland J.A."/>
            <person name="Fraser A."/>
            <person name="French L."/>
            <person name="Garner P."/>
            <person name="Grafham D.V."/>
            <person name="Griffiths C."/>
            <person name="Griffiths M.N.D."/>
            <person name="Gwilliam R."/>
            <person name="Hall R.E."/>
            <person name="Hammond S."/>
            <person name="Harley J.L."/>
            <person name="Heath P.D."/>
            <person name="Ho S."/>
            <person name="Holden J.L."/>
            <person name="Howden P.J."/>
            <person name="Huckle E."/>
            <person name="Hunt A.R."/>
            <person name="Hunt S.E."/>
            <person name="Jekosch K."/>
            <person name="Johnson C.M."/>
            <person name="Johnson D."/>
            <person name="Kay M.P."/>
            <person name="Kimberley A.M."/>
            <person name="King A."/>
            <person name="Knights A."/>
            <person name="Laird G.K."/>
            <person name="Lawlor S."/>
            <person name="Lehvaeslaiho M.H."/>
            <person name="Leversha M.A."/>
            <person name="Lloyd C."/>
            <person name="Lloyd D.M."/>
            <person name="Lovell J.D."/>
            <person name="Marsh V.L."/>
            <person name="Martin S.L."/>
            <person name="McConnachie L.J."/>
            <person name="McLay K."/>
            <person name="McMurray A.A."/>
            <person name="Milne S.A."/>
            <person name="Mistry D."/>
            <person name="Moore M.J.F."/>
            <person name="Mullikin J.C."/>
            <person name="Nickerson T."/>
            <person name="Oliver K."/>
            <person name="Parker A."/>
            <person name="Patel R."/>
            <person name="Pearce T.A.V."/>
            <person name="Peck A.I."/>
            <person name="Phillimore B.J.C.T."/>
            <person name="Prathalingam S.R."/>
            <person name="Plumb R.W."/>
            <person name="Ramsay H."/>
            <person name="Rice C.M."/>
            <person name="Ross M.T."/>
            <person name="Scott C.E."/>
            <person name="Sehra H.K."/>
            <person name="Shownkeen R."/>
            <person name="Sims S."/>
            <person name="Skuce C.D."/>
            <person name="Smith M.L."/>
            <person name="Soderlund C."/>
            <person name="Steward C.A."/>
            <person name="Sulston J.E."/>
            <person name="Swann R.M."/>
            <person name="Sycamore N."/>
            <person name="Taylor R."/>
            <person name="Tee L."/>
            <person name="Thomas D.W."/>
            <person name="Thorpe A."/>
            <person name="Tracey A."/>
            <person name="Tromans A.C."/>
            <person name="Vaudin M."/>
            <person name="Wall M."/>
            <person name="Wallis J.M."/>
            <person name="Whitehead S.L."/>
            <person name="Whittaker P."/>
            <person name="Willey D.L."/>
            <person name="Williams L."/>
            <person name="Williams S.A."/>
            <person name="Wilming L."/>
            <person name="Wray P.W."/>
            <person name="Hubbard T."/>
            <person name="Durbin R.M."/>
            <person name="Bentley D.R."/>
            <person name="Beck S."/>
            <person name="Rogers J."/>
        </authorList>
    </citation>
    <scope>NUCLEOTIDE SEQUENCE [LARGE SCALE GENOMIC DNA]</scope>
</reference>
<reference key="3">
    <citation type="submission" date="2005-09" db="EMBL/GenBank/DDBJ databases">
        <authorList>
            <person name="Mural R.J."/>
            <person name="Istrail S."/>
            <person name="Sutton G.G."/>
            <person name="Florea L."/>
            <person name="Halpern A.L."/>
            <person name="Mobarry C.M."/>
            <person name="Lippert R."/>
            <person name="Walenz B."/>
            <person name="Shatkay H."/>
            <person name="Dew I."/>
            <person name="Miller J.R."/>
            <person name="Flanigan M.J."/>
            <person name="Edwards N.J."/>
            <person name="Bolanos R."/>
            <person name="Fasulo D."/>
            <person name="Halldorsson B.V."/>
            <person name="Hannenhalli S."/>
            <person name="Turner R."/>
            <person name="Yooseph S."/>
            <person name="Lu F."/>
            <person name="Nusskern D.R."/>
            <person name="Shue B.C."/>
            <person name="Zheng X.H."/>
            <person name="Zhong F."/>
            <person name="Delcher A.L."/>
            <person name="Huson D.H."/>
            <person name="Kravitz S.A."/>
            <person name="Mouchard L."/>
            <person name="Reinert K."/>
            <person name="Remington K.A."/>
            <person name="Clark A.G."/>
            <person name="Waterman M.S."/>
            <person name="Eichler E.E."/>
            <person name="Adams M.D."/>
            <person name="Hunkapiller M.W."/>
            <person name="Myers E.W."/>
            <person name="Venter J.C."/>
        </authorList>
    </citation>
    <scope>NUCLEOTIDE SEQUENCE [LARGE SCALE GENOMIC DNA]</scope>
</reference>
<reference key="4">
    <citation type="journal article" date="2004" name="Genome Res.">
        <title>The status, quality, and expansion of the NIH full-length cDNA project: the Mammalian Gene Collection (MGC).</title>
        <authorList>
            <consortium name="The MGC Project Team"/>
        </authorList>
    </citation>
    <scope>NUCLEOTIDE SEQUENCE [LARGE SCALE MRNA]</scope>
    <source>
        <tissue>Brain</tissue>
    </source>
</reference>
<reference key="5">
    <citation type="journal article" date="2008" name="Hum. Genet.">
        <title>The human gamma-glutamyltransferase gene family.</title>
        <authorList>
            <person name="Heisterkamp N."/>
            <person name="Groffen J."/>
            <person name="Warburton D."/>
            <person name="Sneddon T.P."/>
        </authorList>
    </citation>
    <scope>NOMENCLATURE</scope>
</reference>
<organism>
    <name type="scientific">Homo sapiens</name>
    <name type="common">Human</name>
    <dbReference type="NCBI Taxonomy" id="9606"/>
    <lineage>
        <taxon>Eukaryota</taxon>
        <taxon>Metazoa</taxon>
        <taxon>Chordata</taxon>
        <taxon>Craniata</taxon>
        <taxon>Vertebrata</taxon>
        <taxon>Euteleostomi</taxon>
        <taxon>Mammalia</taxon>
        <taxon>Eutheria</taxon>
        <taxon>Euarchontoglires</taxon>
        <taxon>Primates</taxon>
        <taxon>Haplorrhini</taxon>
        <taxon>Catarrhini</taxon>
        <taxon>Hominidae</taxon>
        <taxon>Homo</taxon>
    </lineage>
</organism>
<dbReference type="EMBL" id="L20491">
    <property type="protein sequence ID" value="AAA02885.1"/>
    <property type="molecule type" value="mRNA"/>
</dbReference>
<dbReference type="EMBL" id="L20492">
    <property type="protein sequence ID" value="AAA35864.1"/>
    <property type="molecule type" value="mRNA"/>
</dbReference>
<dbReference type="EMBL" id="AL133466">
    <property type="status" value="NOT_ANNOTATED_CDS"/>
    <property type="molecule type" value="Genomic_DNA"/>
</dbReference>
<dbReference type="EMBL" id="CH471133">
    <property type="protein sequence ID" value="EAX10125.1"/>
    <property type="molecule type" value="Genomic_DNA"/>
</dbReference>
<dbReference type="EMBL" id="CH471133">
    <property type="protein sequence ID" value="EAX10129.1"/>
    <property type="molecule type" value="Genomic_DNA"/>
</dbReference>
<dbReference type="EMBL" id="CH471133">
    <property type="protein sequence ID" value="EAX10130.1"/>
    <property type="molecule type" value="Genomic_DNA"/>
</dbReference>
<dbReference type="EMBL" id="CH471133">
    <property type="protein sequence ID" value="EAX10131.1"/>
    <property type="molecule type" value="Genomic_DNA"/>
</dbReference>
<dbReference type="EMBL" id="BC040904">
    <property type="protein sequence ID" value="AAH40904.1"/>
    <property type="molecule type" value="mRNA"/>
</dbReference>
<dbReference type="CCDS" id="CCDS13163.1"/>
<dbReference type="PIR" id="B47739">
    <property type="entry name" value="B47739"/>
</dbReference>
<dbReference type="RefSeq" id="NP_842563.1">
    <property type="nucleotide sequence ID" value="NM_178311.3"/>
</dbReference>
<dbReference type="RefSeq" id="NP_842564.1">
    <property type="nucleotide sequence ID" value="NM_178312.3"/>
</dbReference>
<dbReference type="RefSeq" id="XP_005260922.1">
    <property type="nucleotide sequence ID" value="XM_005260865.5"/>
</dbReference>
<dbReference type="RefSeq" id="XP_016883615.1">
    <property type="nucleotide sequence ID" value="XM_017028126.3"/>
</dbReference>
<dbReference type="RefSeq" id="XP_054180183.1">
    <property type="nucleotide sequence ID" value="XM_054324208.1"/>
</dbReference>
<dbReference type="RefSeq" id="XP_054180187.1">
    <property type="nucleotide sequence ID" value="XM_054324212.1"/>
</dbReference>
<dbReference type="SMR" id="Q9BX51"/>
<dbReference type="BioGRID" id="124906">
    <property type="interactions" value="12"/>
</dbReference>
<dbReference type="IntAct" id="Q9BX51">
    <property type="interactions" value="3"/>
</dbReference>
<dbReference type="STRING" id="9606.ENSP00000337587"/>
<dbReference type="MEROPS" id="T03.006"/>
<dbReference type="MEROPS" id="T03.016"/>
<dbReference type="GlyConnect" id="1259">
    <property type="glycosylation" value="8 N-Linked glycans (1 site)"/>
</dbReference>
<dbReference type="GlyCosmos" id="Q9BX51">
    <property type="glycosylation" value="1 site, 8 glycans"/>
</dbReference>
<dbReference type="GlyGen" id="Q9BX51">
    <property type="glycosylation" value="1 site, 8 N-linked glycans (1 site)"/>
</dbReference>
<dbReference type="iPTMnet" id="Q9BX51"/>
<dbReference type="BioMuta" id="GGTLC1"/>
<dbReference type="DMDM" id="34395714"/>
<dbReference type="jPOST" id="Q9BX51"/>
<dbReference type="MassIVE" id="Q9BX51"/>
<dbReference type="PaxDb" id="9606-ENSP00000337587"/>
<dbReference type="PeptideAtlas" id="Q9BX51"/>
<dbReference type="ProteomicsDB" id="79349"/>
<dbReference type="Antibodypedia" id="9845">
    <property type="antibodies" value="65 antibodies from 19 providers"/>
</dbReference>
<dbReference type="DNASU" id="92086"/>
<dbReference type="Ensembl" id="ENST00000278765.8">
    <property type="protein sequence ID" value="ENSP00000278765.4"/>
    <property type="gene ID" value="ENSG00000149435.12"/>
</dbReference>
<dbReference type="Ensembl" id="ENST00000286890.8">
    <property type="protein sequence ID" value="ENSP00000286890.4"/>
    <property type="gene ID" value="ENSG00000149435.12"/>
</dbReference>
<dbReference type="Ensembl" id="ENST00000335694.4">
    <property type="protein sequence ID" value="ENSP00000337587.4"/>
    <property type="gene ID" value="ENSG00000149435.12"/>
</dbReference>
<dbReference type="GeneID" id="92086"/>
<dbReference type="KEGG" id="hsa:92086"/>
<dbReference type="MANE-Select" id="ENST00000335694.4">
    <property type="protein sequence ID" value="ENSP00000337587.4"/>
    <property type="RefSeq nucleotide sequence ID" value="NM_178311.3"/>
    <property type="RefSeq protein sequence ID" value="NP_842563.1"/>
</dbReference>
<dbReference type="UCSC" id="uc002wts.3">
    <property type="organism name" value="human"/>
</dbReference>
<dbReference type="AGR" id="HGNC:16437"/>
<dbReference type="CTD" id="92086"/>
<dbReference type="DisGeNET" id="92086"/>
<dbReference type="GeneCards" id="GGTLC1"/>
<dbReference type="HGNC" id="HGNC:16437">
    <property type="gene designation" value="GGTLC1"/>
</dbReference>
<dbReference type="HPA" id="ENSG00000149435">
    <property type="expression patterns" value="Group enriched (lung, testis)"/>
</dbReference>
<dbReference type="MIM" id="612338">
    <property type="type" value="gene"/>
</dbReference>
<dbReference type="neXtProt" id="NX_Q9BX51"/>
<dbReference type="OpenTargets" id="ENSG00000149435"/>
<dbReference type="PharmGKB" id="PA28671"/>
<dbReference type="VEuPathDB" id="HostDB:ENSG00000149435"/>
<dbReference type="eggNOG" id="KOG2410">
    <property type="taxonomic scope" value="Eukaryota"/>
</dbReference>
<dbReference type="GeneTree" id="ENSGT00940000154601"/>
<dbReference type="HOGENOM" id="CLU_014813_1_3_1"/>
<dbReference type="InParanoid" id="Q9BX51"/>
<dbReference type="OMA" id="ESLACAM"/>
<dbReference type="PAN-GO" id="Q9BX51">
    <property type="GO annotations" value="0 GO annotations based on evolutionary models"/>
</dbReference>
<dbReference type="PhylomeDB" id="Q9BX51"/>
<dbReference type="PathwayCommons" id="Q9BX51"/>
<dbReference type="SignaLink" id="Q9BX51"/>
<dbReference type="BioGRID-ORCS" id="92086">
    <property type="hits" value="247 hits in 1050 CRISPR screens"/>
</dbReference>
<dbReference type="GenomeRNAi" id="92086"/>
<dbReference type="Pharos" id="Q9BX51">
    <property type="development level" value="Tbio"/>
</dbReference>
<dbReference type="PRO" id="PR:Q9BX51"/>
<dbReference type="Proteomes" id="UP000005640">
    <property type="component" value="Chromosome 20"/>
</dbReference>
<dbReference type="RNAct" id="Q9BX51">
    <property type="molecule type" value="protein"/>
</dbReference>
<dbReference type="Bgee" id="ENSG00000149435">
    <property type="expression patterns" value="Expressed in right lung and 32 other cell types or tissues"/>
</dbReference>
<dbReference type="GO" id="GO:0036374">
    <property type="term" value="F:glutathione hydrolase activity"/>
    <property type="evidence" value="ECO:0007669"/>
    <property type="project" value="InterPro"/>
</dbReference>
<dbReference type="GO" id="GO:0006751">
    <property type="term" value="P:glutathione catabolic process"/>
    <property type="evidence" value="ECO:0007669"/>
    <property type="project" value="InterPro"/>
</dbReference>
<dbReference type="GO" id="GO:1901750">
    <property type="term" value="P:leukotriene D4 biosynthetic process"/>
    <property type="evidence" value="ECO:0000250"/>
    <property type="project" value="UniProtKB"/>
</dbReference>
<dbReference type="FunFam" id="3.60.20.40:FF:000007">
    <property type="entry name" value="Glutathione hydrolase 1 proenzyme"/>
    <property type="match status" value="1"/>
</dbReference>
<dbReference type="Gene3D" id="3.60.20.40">
    <property type="match status" value="1"/>
</dbReference>
<dbReference type="InterPro" id="IPR055262">
    <property type="entry name" value="GGT_CS"/>
</dbReference>
<dbReference type="InterPro" id="IPR000101">
    <property type="entry name" value="GGT_peptidase"/>
</dbReference>
<dbReference type="InterPro" id="IPR043137">
    <property type="entry name" value="GGT_ssub"/>
</dbReference>
<dbReference type="InterPro" id="IPR029055">
    <property type="entry name" value="Ntn_hydrolases_N"/>
</dbReference>
<dbReference type="PANTHER" id="PTHR45027:SF4">
    <property type="entry name" value="GLUTATHIONE HYDROLASE LIGHT CHAIN 1"/>
    <property type="match status" value="1"/>
</dbReference>
<dbReference type="PANTHER" id="PTHR45027">
    <property type="entry name" value="PUTATIVE GLUTATHIONE HYDROLASE LIGHT CHAIN"/>
    <property type="match status" value="1"/>
</dbReference>
<dbReference type="Pfam" id="PF01019">
    <property type="entry name" value="G_glu_transpept"/>
    <property type="match status" value="1"/>
</dbReference>
<dbReference type="PRINTS" id="PR01210">
    <property type="entry name" value="GGTRANSPTASE"/>
</dbReference>
<dbReference type="SUPFAM" id="SSF56235">
    <property type="entry name" value="N-terminal nucleophile aminohydrolases (Ntn hydrolases)"/>
    <property type="match status" value="1"/>
</dbReference>
<dbReference type="PROSITE" id="PS00462">
    <property type="entry name" value="G_GLU_TRANSPEPTIDASE"/>
    <property type="match status" value="1"/>
</dbReference>
<keyword id="KW-1185">Reference proteome</keyword>
<sequence>MTSEFFSAQLRAQISDDTTHPISYYKPEFYMPDDGGTAHLSVVAEDGSAVSATSTINLYFGSKVRSPVSGILLNNEMDDFSSTSITNEFGVPPSPANFIQPGKQPLSSMCPTIMVGQDGQVRMVVGAAGGTQITMATALAIIYNLWFGYDVKWAVEEPRLHNQLLPNVTTVERNIDQEVTAALETRHHHTQITSTFIAVVQAIVRMAGGWAAASDSRKGGEPAGY</sequence>
<name>GGTL1_HUMAN</name>
<proteinExistence type="evidence at protein level"/>
<feature type="chain" id="PRO_0000205983" description="Glutathione hydrolase light chain 1">
    <location>
        <begin position="1"/>
        <end position="225"/>
    </location>
</feature>
<feature type="active site" description="Nucleophile" evidence="1">
    <location>
        <position position="37"/>
    </location>
</feature>
<feature type="binding site" evidence="1">
    <location>
        <position position="55"/>
    </location>
    <ligand>
        <name>L-glutamate</name>
        <dbReference type="ChEBI" id="CHEBI:29985"/>
    </ligand>
</feature>
<feature type="binding site" evidence="1">
    <location>
        <position position="76"/>
    </location>
    <ligand>
        <name>L-glutamate</name>
        <dbReference type="ChEBI" id="CHEBI:29985"/>
    </ligand>
</feature>
<feature type="binding site" evidence="1">
    <location>
        <begin position="107"/>
        <end position="108"/>
    </location>
    <ligand>
        <name>L-glutamate</name>
        <dbReference type="ChEBI" id="CHEBI:29985"/>
    </ligand>
</feature>
<feature type="binding site" evidence="1">
    <location>
        <begin position="129"/>
        <end position="130"/>
    </location>
    <ligand>
        <name>L-glutamate</name>
        <dbReference type="ChEBI" id="CHEBI:29985"/>
    </ligand>
</feature>